<gene>
    <name evidence="1" type="primary">hisG</name>
    <name type="ordered locus">Csal_2213</name>
</gene>
<feature type="chain" id="PRO_0000319514" description="ATP phosphoribosyltransferase">
    <location>
        <begin position="1"/>
        <end position="216"/>
    </location>
</feature>
<reference key="1">
    <citation type="journal article" date="2011" name="Stand. Genomic Sci.">
        <title>Complete genome sequence of the halophilic and highly halotolerant Chromohalobacter salexigens type strain (1H11(T)).</title>
        <authorList>
            <person name="Copeland A."/>
            <person name="O'Connor K."/>
            <person name="Lucas S."/>
            <person name="Lapidus A."/>
            <person name="Berry K.W."/>
            <person name="Detter J.C."/>
            <person name="Del Rio T.G."/>
            <person name="Hammon N."/>
            <person name="Dalin E."/>
            <person name="Tice H."/>
            <person name="Pitluck S."/>
            <person name="Bruce D."/>
            <person name="Goodwin L."/>
            <person name="Han C."/>
            <person name="Tapia R."/>
            <person name="Saunders E."/>
            <person name="Schmutz J."/>
            <person name="Brettin T."/>
            <person name="Larimer F."/>
            <person name="Land M."/>
            <person name="Hauser L."/>
            <person name="Vargas C."/>
            <person name="Nieto J.J."/>
            <person name="Kyrpides N.C."/>
            <person name="Ivanova N."/>
            <person name="Goker M."/>
            <person name="Klenk H.P."/>
            <person name="Csonka L.N."/>
            <person name="Woyke T."/>
        </authorList>
    </citation>
    <scope>NUCLEOTIDE SEQUENCE [LARGE SCALE GENOMIC DNA]</scope>
    <source>
        <strain>ATCC BAA-138 / DSM 3043 / CIP 106854 / NCIMB 13768 / 1H11</strain>
    </source>
</reference>
<name>HIS1_CHRSD</name>
<sequence>MSKQLILALSKGRILQETLPLLADAGIEPAEDFGKSRKLLFDTNLPDVKLVVIRAVDVPTYVQMGAADVGVAGKDTLLEHGAEGLYEPLDLEISRCKLMTAGIVGAEPTHARRRVATKFVNVARRYYAQQGIQAEVIKLYGAMELAPLMNLADEIVDIVDTGNTLRANGMEPRELIDEVSSRLVVNKASMTMKHDRLKPLIERLGQAVASRRETQA</sequence>
<comment type="function">
    <text evidence="1">Catalyzes the condensation of ATP and 5-phosphoribose 1-diphosphate to form N'-(5'-phosphoribosyl)-ATP (PR-ATP). Has a crucial role in the pathway because the rate of histidine biosynthesis seems to be controlled primarily by regulation of HisG enzymatic activity.</text>
</comment>
<comment type="catalytic activity">
    <reaction evidence="1">
        <text>1-(5-phospho-beta-D-ribosyl)-ATP + diphosphate = 5-phospho-alpha-D-ribose 1-diphosphate + ATP</text>
        <dbReference type="Rhea" id="RHEA:18473"/>
        <dbReference type="ChEBI" id="CHEBI:30616"/>
        <dbReference type="ChEBI" id="CHEBI:33019"/>
        <dbReference type="ChEBI" id="CHEBI:58017"/>
        <dbReference type="ChEBI" id="CHEBI:73183"/>
        <dbReference type="EC" id="2.4.2.17"/>
    </reaction>
</comment>
<comment type="pathway">
    <text evidence="1">Amino-acid biosynthesis; L-histidine biosynthesis; L-histidine from 5-phospho-alpha-D-ribose 1-diphosphate: step 1/9.</text>
</comment>
<comment type="subunit">
    <text evidence="1">Heteromultimer composed of HisG and HisZ subunits.</text>
</comment>
<comment type="subcellular location">
    <subcellularLocation>
        <location evidence="1">Cytoplasm</location>
    </subcellularLocation>
</comment>
<comment type="domain">
    <text>Lacks the C-terminal regulatory region which is replaced by HisZ.</text>
</comment>
<comment type="similarity">
    <text evidence="1">Belongs to the ATP phosphoribosyltransferase family. Short subfamily.</text>
</comment>
<organism>
    <name type="scientific">Chromohalobacter salexigens (strain ATCC BAA-138 / DSM 3043 / CIP 106854 / NCIMB 13768 / 1H11)</name>
    <dbReference type="NCBI Taxonomy" id="290398"/>
    <lineage>
        <taxon>Bacteria</taxon>
        <taxon>Pseudomonadati</taxon>
        <taxon>Pseudomonadota</taxon>
        <taxon>Gammaproteobacteria</taxon>
        <taxon>Oceanospirillales</taxon>
        <taxon>Halomonadaceae</taxon>
        <taxon>Chromohalobacter</taxon>
    </lineage>
</organism>
<evidence type="ECO:0000255" key="1">
    <source>
        <dbReference type="HAMAP-Rule" id="MF_01018"/>
    </source>
</evidence>
<accession>Q1QVE4</accession>
<protein>
    <recommendedName>
        <fullName evidence="1">ATP phosphoribosyltransferase</fullName>
        <shortName evidence="1">ATP-PRT</shortName>
        <shortName evidence="1">ATP-PRTase</shortName>
        <ecNumber evidence="1">2.4.2.17</ecNumber>
    </recommendedName>
</protein>
<keyword id="KW-0028">Amino-acid biosynthesis</keyword>
<keyword id="KW-0067">ATP-binding</keyword>
<keyword id="KW-0963">Cytoplasm</keyword>
<keyword id="KW-0328">Glycosyltransferase</keyword>
<keyword id="KW-0368">Histidine biosynthesis</keyword>
<keyword id="KW-0547">Nucleotide-binding</keyword>
<keyword id="KW-1185">Reference proteome</keyword>
<keyword id="KW-0808">Transferase</keyword>
<proteinExistence type="inferred from homology"/>
<dbReference type="EC" id="2.4.2.17" evidence="1"/>
<dbReference type="EMBL" id="CP000285">
    <property type="protein sequence ID" value="ABE59564.1"/>
    <property type="molecule type" value="Genomic_DNA"/>
</dbReference>
<dbReference type="RefSeq" id="WP_011507510.1">
    <property type="nucleotide sequence ID" value="NC_007963.1"/>
</dbReference>
<dbReference type="SMR" id="Q1QVE4"/>
<dbReference type="STRING" id="290398.Csal_2213"/>
<dbReference type="GeneID" id="95334931"/>
<dbReference type="KEGG" id="csa:Csal_2213"/>
<dbReference type="eggNOG" id="COG0040">
    <property type="taxonomic scope" value="Bacteria"/>
</dbReference>
<dbReference type="HOGENOM" id="CLU_038115_2_0_6"/>
<dbReference type="OrthoDB" id="9801867at2"/>
<dbReference type="UniPathway" id="UPA00031">
    <property type="reaction ID" value="UER00006"/>
</dbReference>
<dbReference type="Proteomes" id="UP000000239">
    <property type="component" value="Chromosome"/>
</dbReference>
<dbReference type="GO" id="GO:0005737">
    <property type="term" value="C:cytoplasm"/>
    <property type="evidence" value="ECO:0007669"/>
    <property type="project" value="UniProtKB-SubCell"/>
</dbReference>
<dbReference type="GO" id="GO:0005524">
    <property type="term" value="F:ATP binding"/>
    <property type="evidence" value="ECO:0007669"/>
    <property type="project" value="UniProtKB-KW"/>
</dbReference>
<dbReference type="GO" id="GO:0003879">
    <property type="term" value="F:ATP phosphoribosyltransferase activity"/>
    <property type="evidence" value="ECO:0007669"/>
    <property type="project" value="UniProtKB-UniRule"/>
</dbReference>
<dbReference type="GO" id="GO:0000105">
    <property type="term" value="P:L-histidine biosynthetic process"/>
    <property type="evidence" value="ECO:0007669"/>
    <property type="project" value="UniProtKB-UniRule"/>
</dbReference>
<dbReference type="CDD" id="cd13595">
    <property type="entry name" value="PBP2_HisGs"/>
    <property type="match status" value="1"/>
</dbReference>
<dbReference type="FunFam" id="3.40.190.10:FF:000011">
    <property type="entry name" value="ATP phosphoribosyltransferase"/>
    <property type="match status" value="1"/>
</dbReference>
<dbReference type="Gene3D" id="3.40.190.10">
    <property type="entry name" value="Periplasmic binding protein-like II"/>
    <property type="match status" value="2"/>
</dbReference>
<dbReference type="HAMAP" id="MF_01018">
    <property type="entry name" value="HisG_Short"/>
    <property type="match status" value="1"/>
</dbReference>
<dbReference type="InterPro" id="IPR013820">
    <property type="entry name" value="ATP_PRibTrfase_cat"/>
</dbReference>
<dbReference type="InterPro" id="IPR018198">
    <property type="entry name" value="ATP_PRibTrfase_CS"/>
</dbReference>
<dbReference type="InterPro" id="IPR001348">
    <property type="entry name" value="ATP_PRibTrfase_HisG"/>
</dbReference>
<dbReference type="InterPro" id="IPR024893">
    <property type="entry name" value="ATP_PRibTrfase_HisG_short"/>
</dbReference>
<dbReference type="NCBIfam" id="TIGR00070">
    <property type="entry name" value="hisG"/>
    <property type="match status" value="1"/>
</dbReference>
<dbReference type="PANTHER" id="PTHR21403:SF8">
    <property type="entry name" value="ATP PHOSPHORIBOSYLTRANSFERASE"/>
    <property type="match status" value="1"/>
</dbReference>
<dbReference type="PANTHER" id="PTHR21403">
    <property type="entry name" value="ATP PHOSPHORIBOSYLTRANSFERASE ATP-PRTASE"/>
    <property type="match status" value="1"/>
</dbReference>
<dbReference type="Pfam" id="PF01634">
    <property type="entry name" value="HisG"/>
    <property type="match status" value="1"/>
</dbReference>
<dbReference type="SUPFAM" id="SSF53850">
    <property type="entry name" value="Periplasmic binding protein-like II"/>
    <property type="match status" value="1"/>
</dbReference>
<dbReference type="PROSITE" id="PS01316">
    <property type="entry name" value="ATP_P_PHORIBOSYLTR"/>
    <property type="match status" value="1"/>
</dbReference>